<dbReference type="EMBL" id="AY653733">
    <property type="protein sequence ID" value="AAV50542.1"/>
    <property type="molecule type" value="Genomic_DNA"/>
</dbReference>
<dbReference type="KEGG" id="vg:9924879"/>
<dbReference type="Proteomes" id="UP000001134">
    <property type="component" value="Genome"/>
</dbReference>
<accession>Q5UPV2</accession>
<reference key="1">
    <citation type="journal article" date="2004" name="Science">
        <title>The 1.2-megabase genome sequence of Mimivirus.</title>
        <authorList>
            <person name="Raoult D."/>
            <person name="Audic S."/>
            <person name="Robert C."/>
            <person name="Abergel C."/>
            <person name="Renesto P."/>
            <person name="Ogata H."/>
            <person name="La Scola B."/>
            <person name="Susan M."/>
            <person name="Claverie J.-M."/>
        </authorList>
    </citation>
    <scope>NUCLEOTIDE SEQUENCE [LARGE SCALE GENOMIC DNA]</scope>
    <source>
        <strain>Rowbotham-Bradford</strain>
    </source>
</reference>
<organism>
    <name type="scientific">Acanthamoeba polyphaga mimivirus</name>
    <name type="common">APMV</name>
    <dbReference type="NCBI Taxonomy" id="212035"/>
    <lineage>
        <taxon>Viruses</taxon>
        <taxon>Varidnaviria</taxon>
        <taxon>Bamfordvirae</taxon>
        <taxon>Nucleocytoviricota</taxon>
        <taxon>Megaviricetes</taxon>
        <taxon>Imitervirales</taxon>
        <taxon>Mimiviridae</taxon>
        <taxon>Megamimivirinae</taxon>
        <taxon>Mimivirus</taxon>
        <taxon>Mimivirus bradfordmassiliense</taxon>
    </lineage>
</organism>
<gene>
    <name type="ordered locus">MIMI_L270</name>
</gene>
<name>YL270_MIMIV</name>
<protein>
    <recommendedName>
        <fullName>Uncharacterized protein L270</fullName>
    </recommendedName>
</protein>
<sequence length="112" mass="12859">MSDLEAEPTFEEKFGYVPRGHTCNGAFNMFERPKEPRKPKKAKQTGSLCTKCGTRKKRGLCKLCDRCPKCNFPKITTTYQIKSFGMIKDKKQIVCPNACKITDDFYFGNWMA</sequence>
<keyword id="KW-1185">Reference proteome</keyword>
<organismHost>
    <name type="scientific">Acanthamoeba polyphaga</name>
    <name type="common">Amoeba</name>
    <dbReference type="NCBI Taxonomy" id="5757"/>
</organismHost>
<feature type="chain" id="PRO_0000243998" description="Uncharacterized protein L270">
    <location>
        <begin position="1"/>
        <end position="112"/>
    </location>
</feature>
<proteinExistence type="predicted"/>